<organism>
    <name type="scientific">Synechococcus elongatus (strain ATCC 33912 / PCC 7942 / FACHB-805)</name>
    <name type="common">Anacystis nidulans R2</name>
    <dbReference type="NCBI Taxonomy" id="1140"/>
    <lineage>
        <taxon>Bacteria</taxon>
        <taxon>Bacillati</taxon>
        <taxon>Cyanobacteriota</taxon>
        <taxon>Cyanophyceae</taxon>
        <taxon>Synechococcales</taxon>
        <taxon>Synechococcaceae</taxon>
        <taxon>Synechococcus</taxon>
    </lineage>
</organism>
<evidence type="ECO:0000255" key="1">
    <source>
        <dbReference type="HAMAP-Rule" id="MF_00129"/>
    </source>
</evidence>
<keyword id="KW-0963">Cytoplasm</keyword>
<keyword id="KW-0274">FAD</keyword>
<keyword id="KW-0285">Flavoprotein</keyword>
<keyword id="KW-0520">NAD</keyword>
<keyword id="KW-1185">Reference proteome</keyword>
<keyword id="KW-0819">tRNA processing</keyword>
<proteinExistence type="inferred from homology"/>
<sequence>MPHTEEFDVIVIGAGHAGCEAALAAARLGCQTLLLTLNLDRIGWQPCNPAVGGPAKSQLAHEVDALGGEIGKMADRTYLQKRVLNASRGPAVWALRAQTDKREYAAVIKQVLEQQPNLRLREGMVTDLLIGPNDEVQGVTTYFGSSFRAKAVILTTGTFLGGCIWVGNKSMPAGRAGEFAAVGLTETLQRLGFETDRLKTGTPARVDKRSVDYSRLEPQPGDPEVRWFSFDPEAWVEREQLPCYLTRTTAETHKLIRDNLHLTPVYGGYIDAKGPRYCPSIEDKIVRFADKESHQIFIEPEGRDIPELYIQGFSTGLPEDLQLALLQTLPGLEDCVMLRPAYAVEYDYLPATQCLPTLMTRRVEGLFSAGQLNGTTGYEEAAAQGIVAGINAARFVQGQDAIVFPREGSYIGTLIDDLCTKDLREPYRVLTSRSEYRLLLRADNADQRMTPLGREIGLIDDRRWALFEQKQARIAAEQTRLTQQRVKEHDPVGQAIAQQTQAPIKGSATLADLLRRPNFHYIDLEAHGLGDPSLAIAEKEGAEIAIKYAGYLQRQQAQVDQVVRQSQRPLPVDLDYSAITSMRLEAREKLARFRPLTLGQASRIGGVNPADINALLIWLEVQERQRSQVETALVR</sequence>
<reference key="1">
    <citation type="submission" date="2005-08" db="EMBL/GenBank/DDBJ databases">
        <title>Complete sequence of chromosome 1 of Synechococcus elongatus PCC 7942.</title>
        <authorList>
            <consortium name="US DOE Joint Genome Institute"/>
            <person name="Copeland A."/>
            <person name="Lucas S."/>
            <person name="Lapidus A."/>
            <person name="Barry K."/>
            <person name="Detter J.C."/>
            <person name="Glavina T."/>
            <person name="Hammon N."/>
            <person name="Israni S."/>
            <person name="Pitluck S."/>
            <person name="Schmutz J."/>
            <person name="Larimer F."/>
            <person name="Land M."/>
            <person name="Kyrpides N."/>
            <person name="Lykidis A."/>
            <person name="Golden S."/>
            <person name="Richardson P."/>
        </authorList>
    </citation>
    <scope>NUCLEOTIDE SEQUENCE [LARGE SCALE GENOMIC DNA]</scope>
    <source>
        <strain>ATCC 33912 / PCC 7942 / FACHB-805</strain>
    </source>
</reference>
<gene>
    <name evidence="1" type="primary">mnmG</name>
    <name evidence="1" type="synonym">gidA</name>
    <name type="ordered locus">Synpcc7942_2423</name>
</gene>
<protein>
    <recommendedName>
        <fullName evidence="1">tRNA uridine 5-carboxymethylaminomethyl modification enzyme MnmG</fullName>
    </recommendedName>
    <alternativeName>
        <fullName evidence="1">Glucose-inhibited division protein A</fullName>
    </alternativeName>
</protein>
<name>MNMG_SYNE7</name>
<feature type="chain" id="PRO_1000016699" description="tRNA uridine 5-carboxymethylaminomethyl modification enzyme MnmG">
    <location>
        <begin position="1"/>
        <end position="635"/>
    </location>
</feature>
<feature type="binding site" evidence="1">
    <location>
        <begin position="13"/>
        <end position="18"/>
    </location>
    <ligand>
        <name>FAD</name>
        <dbReference type="ChEBI" id="CHEBI:57692"/>
    </ligand>
</feature>
<feature type="binding site" evidence="1">
    <location>
        <begin position="274"/>
        <end position="288"/>
    </location>
    <ligand>
        <name>NAD(+)</name>
        <dbReference type="ChEBI" id="CHEBI:57540"/>
    </ligand>
</feature>
<dbReference type="EMBL" id="CP000100">
    <property type="protein sequence ID" value="ABB58453.1"/>
    <property type="molecule type" value="Genomic_DNA"/>
</dbReference>
<dbReference type="RefSeq" id="WP_011378455.1">
    <property type="nucleotide sequence ID" value="NZ_JACJTX010000001.1"/>
</dbReference>
<dbReference type="SMR" id="Q31KG6"/>
<dbReference type="STRING" id="1140.Synpcc7942_2423"/>
<dbReference type="PaxDb" id="1140-Synpcc7942_2423"/>
<dbReference type="GeneID" id="72431312"/>
<dbReference type="KEGG" id="syf:Synpcc7942_2423"/>
<dbReference type="eggNOG" id="COG0445">
    <property type="taxonomic scope" value="Bacteria"/>
</dbReference>
<dbReference type="HOGENOM" id="CLU_007831_2_2_3"/>
<dbReference type="OrthoDB" id="9815560at2"/>
<dbReference type="BioCyc" id="SYNEL:SYNPCC7942_2423-MONOMER"/>
<dbReference type="Proteomes" id="UP000889800">
    <property type="component" value="Chromosome"/>
</dbReference>
<dbReference type="GO" id="GO:0005737">
    <property type="term" value="C:cytoplasm"/>
    <property type="evidence" value="ECO:0007669"/>
    <property type="project" value="UniProtKB-SubCell"/>
</dbReference>
<dbReference type="GO" id="GO:0050660">
    <property type="term" value="F:flavin adenine dinucleotide binding"/>
    <property type="evidence" value="ECO:0007669"/>
    <property type="project" value="UniProtKB-UniRule"/>
</dbReference>
<dbReference type="GO" id="GO:0030488">
    <property type="term" value="P:tRNA methylation"/>
    <property type="evidence" value="ECO:0007669"/>
    <property type="project" value="TreeGrafter"/>
</dbReference>
<dbReference type="GO" id="GO:0002098">
    <property type="term" value="P:tRNA wobble uridine modification"/>
    <property type="evidence" value="ECO:0007669"/>
    <property type="project" value="InterPro"/>
</dbReference>
<dbReference type="FunFam" id="1.10.10.1800:FF:000001">
    <property type="entry name" value="tRNA uridine 5-carboxymethylaminomethyl modification enzyme MnmG"/>
    <property type="match status" value="1"/>
</dbReference>
<dbReference type="FunFam" id="1.10.150.570:FF:000001">
    <property type="entry name" value="tRNA uridine 5-carboxymethylaminomethyl modification enzyme MnmG"/>
    <property type="match status" value="1"/>
</dbReference>
<dbReference type="FunFam" id="3.50.50.60:FF:000094">
    <property type="entry name" value="tRNA uridine 5-carboxymethylaminomethyl modification enzyme MnmG"/>
    <property type="match status" value="1"/>
</dbReference>
<dbReference type="FunFam" id="3.50.50.60:FF:000119">
    <property type="entry name" value="tRNA uridine 5-carboxymethylaminomethyl modification enzyme MnmG"/>
    <property type="match status" value="1"/>
</dbReference>
<dbReference type="Gene3D" id="3.50.50.60">
    <property type="entry name" value="FAD/NAD(P)-binding domain"/>
    <property type="match status" value="2"/>
</dbReference>
<dbReference type="Gene3D" id="1.10.150.570">
    <property type="entry name" value="GidA associated domain, C-terminal subdomain"/>
    <property type="match status" value="1"/>
</dbReference>
<dbReference type="Gene3D" id="1.10.10.1800">
    <property type="entry name" value="tRNA uridine 5-carboxymethylaminomethyl modification enzyme MnmG/GidA"/>
    <property type="match status" value="1"/>
</dbReference>
<dbReference type="HAMAP" id="MF_00129">
    <property type="entry name" value="MnmG_GidA"/>
    <property type="match status" value="1"/>
</dbReference>
<dbReference type="InterPro" id="IPR036188">
    <property type="entry name" value="FAD/NAD-bd_sf"/>
</dbReference>
<dbReference type="InterPro" id="IPR049312">
    <property type="entry name" value="GIDA_C_N"/>
</dbReference>
<dbReference type="InterPro" id="IPR004416">
    <property type="entry name" value="MnmG"/>
</dbReference>
<dbReference type="InterPro" id="IPR002218">
    <property type="entry name" value="MnmG-rel"/>
</dbReference>
<dbReference type="InterPro" id="IPR020595">
    <property type="entry name" value="MnmG-rel_CS"/>
</dbReference>
<dbReference type="InterPro" id="IPR026904">
    <property type="entry name" value="MnmG_C"/>
</dbReference>
<dbReference type="InterPro" id="IPR047001">
    <property type="entry name" value="MnmG_C_subdom"/>
</dbReference>
<dbReference type="InterPro" id="IPR044920">
    <property type="entry name" value="MnmG_C_subdom_sf"/>
</dbReference>
<dbReference type="InterPro" id="IPR040131">
    <property type="entry name" value="MnmG_N"/>
</dbReference>
<dbReference type="NCBIfam" id="TIGR00136">
    <property type="entry name" value="mnmG_gidA"/>
    <property type="match status" value="1"/>
</dbReference>
<dbReference type="PANTHER" id="PTHR11806">
    <property type="entry name" value="GLUCOSE INHIBITED DIVISION PROTEIN A"/>
    <property type="match status" value="1"/>
</dbReference>
<dbReference type="PANTHER" id="PTHR11806:SF0">
    <property type="entry name" value="PROTEIN MTO1 HOMOLOG, MITOCHONDRIAL"/>
    <property type="match status" value="1"/>
</dbReference>
<dbReference type="Pfam" id="PF01134">
    <property type="entry name" value="GIDA"/>
    <property type="match status" value="1"/>
</dbReference>
<dbReference type="Pfam" id="PF21680">
    <property type="entry name" value="GIDA_C_1st"/>
    <property type="match status" value="1"/>
</dbReference>
<dbReference type="Pfam" id="PF13932">
    <property type="entry name" value="SAM_GIDA_C"/>
    <property type="match status" value="1"/>
</dbReference>
<dbReference type="SMART" id="SM01228">
    <property type="entry name" value="GIDA_assoc_3"/>
    <property type="match status" value="1"/>
</dbReference>
<dbReference type="SUPFAM" id="SSF51905">
    <property type="entry name" value="FAD/NAD(P)-binding domain"/>
    <property type="match status" value="1"/>
</dbReference>
<dbReference type="PROSITE" id="PS01280">
    <property type="entry name" value="GIDA_1"/>
    <property type="match status" value="1"/>
</dbReference>
<dbReference type="PROSITE" id="PS01281">
    <property type="entry name" value="GIDA_2"/>
    <property type="match status" value="1"/>
</dbReference>
<comment type="function">
    <text evidence="1">NAD-binding protein involved in the addition of a carboxymethylaminomethyl (cmnm) group at the wobble position (U34) of certain tRNAs, forming tRNA-cmnm(5)s(2)U34.</text>
</comment>
<comment type="cofactor">
    <cofactor evidence="1">
        <name>FAD</name>
        <dbReference type="ChEBI" id="CHEBI:57692"/>
    </cofactor>
</comment>
<comment type="subunit">
    <text evidence="1">Homodimer. Heterotetramer of two MnmE and two MnmG subunits.</text>
</comment>
<comment type="subcellular location">
    <subcellularLocation>
        <location evidence="1">Cytoplasm</location>
    </subcellularLocation>
</comment>
<comment type="similarity">
    <text evidence="1">Belongs to the MnmG family.</text>
</comment>
<accession>Q31KG6</accession>